<feature type="signal peptide" description="Tat-type signal" evidence="2">
    <location>
        <begin position="1"/>
        <end position="46"/>
    </location>
</feature>
<feature type="chain" id="PRO_0000019822" description="Nitrous-oxide reductase">
    <location>
        <begin position="47"/>
        <end position="642"/>
    </location>
</feature>
<feature type="region of interest" description="COX2-like">
    <location>
        <begin position="544"/>
        <end position="642"/>
    </location>
</feature>
<feature type="binding site" evidence="1">
    <location>
        <position position="135"/>
    </location>
    <ligand>
        <name>Cu cation</name>
        <dbReference type="ChEBI" id="CHEBI:23378"/>
        <label>Z2</label>
    </ligand>
</feature>
<feature type="binding site" evidence="1">
    <location>
        <position position="136"/>
    </location>
    <ligand>
        <name>Cu cation</name>
        <dbReference type="ChEBI" id="CHEBI:23378"/>
        <label>Z3</label>
    </ligand>
</feature>
<feature type="binding site" evidence="1">
    <location>
        <position position="184"/>
    </location>
    <ligand>
        <name>Cu cation</name>
        <dbReference type="ChEBI" id="CHEBI:23378"/>
        <label>Z2</label>
    </ligand>
</feature>
<feature type="binding site" evidence="1">
    <location>
        <position position="261"/>
    </location>
    <ligand>
        <name>Ca(2+)</name>
        <dbReference type="ChEBI" id="CHEBI:29108"/>
        <label>2</label>
    </ligand>
</feature>
<feature type="binding site" evidence="1">
    <location>
        <position position="264"/>
    </location>
    <ligand>
        <name>Ca(2+)</name>
        <dbReference type="ChEBI" id="CHEBI:29108"/>
        <label>2</label>
    </ligand>
</feature>
<feature type="binding site" evidence="1">
    <location>
        <position position="272"/>
    </location>
    <ligand>
        <name>Ca(2+)</name>
        <dbReference type="ChEBI" id="CHEBI:29108"/>
        <label>2</label>
    </ligand>
</feature>
<feature type="binding site" evidence="1">
    <location>
        <position position="278"/>
    </location>
    <ligand>
        <name>Ca(2+)</name>
        <dbReference type="ChEBI" id="CHEBI:29108"/>
        <label>2</label>
    </ligand>
</feature>
<feature type="binding site" evidence="1">
    <location>
        <position position="325"/>
    </location>
    <ligand>
        <name>Ca(2+)</name>
        <dbReference type="ChEBI" id="CHEBI:29108"/>
        <label>2</label>
    </ligand>
</feature>
<feature type="binding site" evidence="1">
    <location>
        <position position="327"/>
    </location>
    <ligand>
        <name>Cu cation</name>
        <dbReference type="ChEBI" id="CHEBI:23378"/>
        <label>Z1</label>
    </ligand>
</feature>
<feature type="binding site" evidence="1">
    <location>
        <position position="382"/>
    </location>
    <ligand>
        <name>Cu cation</name>
        <dbReference type="ChEBI" id="CHEBI:23378"/>
        <label>Z1</label>
    </ligand>
</feature>
<feature type="binding site" evidence="1">
    <location>
        <position position="433"/>
    </location>
    <ligand>
        <name>Cu cation</name>
        <dbReference type="ChEBI" id="CHEBI:23378"/>
        <label>Z3</label>
    </ligand>
</feature>
<feature type="binding site" evidence="1">
    <location>
        <position position="454"/>
    </location>
    <ligand>
        <name>Ca(2+)</name>
        <dbReference type="ChEBI" id="CHEBI:29108"/>
        <label>1</label>
    </ligand>
</feature>
<feature type="binding site" evidence="1">
    <location>
        <position position="469"/>
    </location>
    <ligand>
        <name>Ca(2+)</name>
        <dbReference type="ChEBI" id="CHEBI:29108"/>
        <label>1</label>
    </ligand>
</feature>
<feature type="binding site" evidence="1">
    <location>
        <position position="494"/>
    </location>
    <ligand>
        <name>Cu cation</name>
        <dbReference type="ChEBI" id="CHEBI:23378"/>
        <label>Z4</label>
    </ligand>
</feature>
<feature type="binding site" evidence="1">
    <location>
        <position position="585"/>
    </location>
    <ligand>
        <name>Cu cation</name>
        <dbReference type="ChEBI" id="CHEBI:23378"/>
        <label>A1</label>
    </ligand>
</feature>
<feature type="binding site" evidence="1">
    <location>
        <position position="620"/>
    </location>
    <ligand>
        <name>Cu cation</name>
        <dbReference type="ChEBI" id="CHEBI:23378"/>
        <label>A1</label>
    </ligand>
</feature>
<feature type="binding site" evidence="1">
    <location>
        <position position="620"/>
    </location>
    <ligand>
        <name>Cu cation</name>
        <dbReference type="ChEBI" id="CHEBI:23378"/>
        <label>A2</label>
    </ligand>
</feature>
<feature type="binding site" evidence="1">
    <location>
        <position position="622"/>
    </location>
    <ligand>
        <name>Cu cation</name>
        <dbReference type="ChEBI" id="CHEBI:23378"/>
        <label>A2</label>
    </ligand>
</feature>
<feature type="binding site" evidence="1">
    <location>
        <position position="624"/>
    </location>
    <ligand>
        <name>Cu cation</name>
        <dbReference type="ChEBI" id="CHEBI:23378"/>
        <label>A1</label>
    </ligand>
</feature>
<feature type="binding site" evidence="1">
    <location>
        <position position="624"/>
    </location>
    <ligand>
        <name>Cu cation</name>
        <dbReference type="ChEBI" id="CHEBI:23378"/>
        <label>A2</label>
    </ligand>
</feature>
<feature type="binding site" evidence="1">
    <location>
        <position position="628"/>
    </location>
    <ligand>
        <name>Cu cation</name>
        <dbReference type="ChEBI" id="CHEBI:23378"/>
        <label>A2</label>
    </ligand>
</feature>
<feature type="binding site" evidence="1">
    <location>
        <position position="631"/>
    </location>
    <ligand>
        <name>Cu cation</name>
        <dbReference type="ChEBI" id="CHEBI:23378"/>
        <label>A1</label>
    </ligand>
</feature>
<feature type="sequence conflict" description="In Ref. 1; CAA64426." evidence="3" ref="1">
    <original>H</original>
    <variation>L</variation>
    <location>
        <position position="6"/>
    </location>
</feature>
<feature type="sequence conflict" description="In Ref. 1; CAA64426." evidence="3" ref="1">
    <original>AR</original>
    <variation>GA</variation>
    <location>
        <begin position="162"/>
        <end position="163"/>
    </location>
</feature>
<feature type="sequence conflict" description="In Ref. 1; CAA64426." evidence="3" ref="1">
    <original>T</original>
    <variation>S</variation>
    <location>
        <position position="259"/>
    </location>
</feature>
<feature type="sequence conflict" description="In Ref. 1; CAA64426." evidence="3" ref="1">
    <original>AIKA</original>
    <variation>PLRR</variation>
    <location>
        <begin position="291"/>
        <end position="294"/>
    </location>
</feature>
<feature type="sequence conflict" description="In Ref. 1; CAA64426." evidence="3" ref="1">
    <original>W</original>
    <variation>S</variation>
    <location>
        <position position="535"/>
    </location>
</feature>
<feature type="strand" evidence="4">
    <location>
        <begin position="61"/>
        <end position="66"/>
    </location>
</feature>
<feature type="strand" evidence="4">
    <location>
        <begin position="73"/>
        <end position="79"/>
    </location>
</feature>
<feature type="turn" evidence="4">
    <location>
        <begin position="80"/>
        <end position="82"/>
    </location>
</feature>
<feature type="strand" evidence="4">
    <location>
        <begin position="83"/>
        <end position="92"/>
    </location>
</feature>
<feature type="turn" evidence="4">
    <location>
        <begin position="95"/>
        <end position="97"/>
    </location>
</feature>
<feature type="turn" evidence="4">
    <location>
        <begin position="99"/>
        <end position="101"/>
    </location>
</feature>
<feature type="helix" evidence="4">
    <location>
        <begin position="103"/>
        <end position="110"/>
    </location>
</feature>
<feature type="helix" evidence="4">
    <location>
        <begin position="115"/>
        <end position="123"/>
    </location>
</feature>
<feature type="strand" evidence="4">
    <location>
        <begin position="137"/>
        <end position="142"/>
    </location>
</feature>
<feature type="strand" evidence="4">
    <location>
        <begin position="145"/>
        <end position="155"/>
    </location>
</feature>
<feature type="turn" evidence="4">
    <location>
        <begin position="156"/>
        <end position="159"/>
    </location>
</feature>
<feature type="strand" evidence="4">
    <location>
        <begin position="160"/>
        <end position="165"/>
    </location>
</feature>
<feature type="turn" evidence="4">
    <location>
        <begin position="166"/>
        <end position="169"/>
    </location>
</feature>
<feature type="strand" evidence="4">
    <location>
        <begin position="170"/>
        <end position="176"/>
    </location>
</feature>
<feature type="strand" evidence="4">
    <location>
        <begin position="182"/>
        <end position="188"/>
    </location>
</feature>
<feature type="strand" evidence="4">
    <location>
        <begin position="191"/>
        <end position="193"/>
    </location>
</feature>
<feature type="strand" evidence="4">
    <location>
        <begin position="195"/>
        <end position="201"/>
    </location>
</feature>
<feature type="strand" evidence="4">
    <location>
        <begin position="210"/>
        <end position="213"/>
    </location>
</feature>
<feature type="helix" evidence="4">
    <location>
        <begin position="217"/>
        <end position="219"/>
    </location>
</feature>
<feature type="strand" evidence="4">
    <location>
        <begin position="221"/>
        <end position="228"/>
    </location>
</feature>
<feature type="turn" evidence="4">
    <location>
        <begin position="229"/>
        <end position="232"/>
    </location>
</feature>
<feature type="strand" evidence="4">
    <location>
        <begin position="233"/>
        <end position="242"/>
    </location>
</feature>
<feature type="strand" evidence="4">
    <location>
        <begin position="247"/>
        <end position="249"/>
    </location>
</feature>
<feature type="strand" evidence="4">
    <location>
        <begin position="251"/>
        <end position="261"/>
    </location>
</feature>
<feature type="helix" evidence="4">
    <location>
        <begin position="269"/>
        <end position="272"/>
    </location>
</feature>
<feature type="strand" evidence="4">
    <location>
        <begin position="278"/>
        <end position="284"/>
    </location>
</feature>
<feature type="helix" evidence="4">
    <location>
        <begin position="285"/>
        <end position="293"/>
    </location>
</feature>
<feature type="strand" evidence="4">
    <location>
        <begin position="297"/>
        <end position="300"/>
    </location>
</feature>
<feature type="strand" evidence="4">
    <location>
        <begin position="303"/>
        <end position="307"/>
    </location>
</feature>
<feature type="helix" evidence="4">
    <location>
        <begin position="310"/>
        <end position="312"/>
    </location>
</feature>
<feature type="strand" evidence="4">
    <location>
        <begin position="315"/>
        <end position="325"/>
    </location>
</feature>
<feature type="strand" evidence="4">
    <location>
        <begin position="329"/>
        <end position="331"/>
    </location>
</feature>
<feature type="strand" evidence="4">
    <location>
        <begin position="335"/>
        <end position="341"/>
    </location>
</feature>
<feature type="strand" evidence="4">
    <location>
        <begin position="345"/>
        <end position="352"/>
    </location>
</feature>
<feature type="helix" evidence="4">
    <location>
        <begin position="353"/>
        <end position="355"/>
    </location>
</feature>
<feature type="helix" evidence="4">
    <location>
        <begin position="356"/>
        <end position="361"/>
    </location>
</feature>
<feature type="helix" evidence="4">
    <location>
        <begin position="366"/>
        <end position="369"/>
    </location>
</feature>
<feature type="strand" evidence="4">
    <location>
        <begin position="370"/>
        <end position="372"/>
    </location>
</feature>
<feature type="strand" evidence="4">
    <location>
        <begin position="380"/>
        <end position="385"/>
    </location>
</feature>
<feature type="strand" evidence="4">
    <location>
        <begin position="389"/>
        <end position="395"/>
    </location>
</feature>
<feature type="turn" evidence="4">
    <location>
        <begin position="396"/>
        <end position="399"/>
    </location>
</feature>
<feature type="strand" evidence="4">
    <location>
        <begin position="400"/>
        <end position="405"/>
    </location>
</feature>
<feature type="helix" evidence="4">
    <location>
        <begin position="406"/>
        <end position="413"/>
    </location>
</feature>
<feature type="strand" evidence="4">
    <location>
        <begin position="421"/>
        <end position="426"/>
    </location>
</feature>
<feature type="strand" evidence="4">
    <location>
        <begin position="431"/>
        <end position="436"/>
    </location>
</feature>
<feature type="turn" evidence="4">
    <location>
        <begin position="437"/>
        <end position="440"/>
    </location>
</feature>
<feature type="strand" evidence="4">
    <location>
        <begin position="446"/>
        <end position="454"/>
    </location>
</feature>
<feature type="strand" evidence="4">
    <location>
        <begin position="464"/>
        <end position="466"/>
    </location>
</feature>
<feature type="strand" evidence="4">
    <location>
        <begin position="469"/>
        <end position="475"/>
    </location>
</feature>
<feature type="strand" evidence="4">
    <location>
        <begin position="477"/>
        <end position="480"/>
    </location>
</feature>
<feature type="strand" evidence="4">
    <location>
        <begin position="482"/>
        <end position="491"/>
    </location>
</feature>
<feature type="strand" evidence="4">
    <location>
        <begin position="496"/>
        <end position="499"/>
    </location>
</feature>
<feature type="helix" evidence="4">
    <location>
        <begin position="501"/>
        <end position="503"/>
    </location>
</feature>
<feature type="helix" evidence="4">
    <location>
        <begin position="516"/>
        <end position="518"/>
    </location>
</feature>
<feature type="helix" evidence="4">
    <location>
        <begin position="519"/>
        <end position="527"/>
    </location>
</feature>
<feature type="strand" evidence="4">
    <location>
        <begin position="539"/>
        <end position="542"/>
    </location>
</feature>
<feature type="strand" evidence="4">
    <location>
        <begin position="545"/>
        <end position="553"/>
    </location>
</feature>
<feature type="strand" evidence="4">
    <location>
        <begin position="556"/>
        <end position="558"/>
    </location>
</feature>
<feature type="strand" evidence="4">
    <location>
        <begin position="560"/>
        <end position="565"/>
    </location>
</feature>
<feature type="strand" evidence="4">
    <location>
        <begin position="569"/>
        <end position="576"/>
    </location>
</feature>
<feature type="strand" evidence="4">
    <location>
        <begin position="585"/>
        <end position="589"/>
    </location>
</feature>
<feature type="turn" evidence="4">
    <location>
        <begin position="590"/>
        <end position="593"/>
    </location>
</feature>
<feature type="strand" evidence="4">
    <location>
        <begin position="594"/>
        <end position="598"/>
    </location>
</feature>
<feature type="strand" evidence="4">
    <location>
        <begin position="603"/>
        <end position="609"/>
    </location>
</feature>
<feature type="strand" evidence="4">
    <location>
        <begin position="614"/>
        <end position="619"/>
    </location>
</feature>
<feature type="helix" evidence="4">
    <location>
        <begin position="628"/>
        <end position="630"/>
    </location>
</feature>
<feature type="strand" evidence="4">
    <location>
        <begin position="632"/>
        <end position="638"/>
    </location>
</feature>
<name>NOSZ_ACHCY</name>
<protein>
    <recommendedName>
        <fullName>Nitrous-oxide reductase</fullName>
        <ecNumber>1.7.2.4</ecNumber>
    </recommendedName>
    <alternativeName>
        <fullName>N(2)OR</fullName>
    </alternativeName>
    <alternativeName>
        <fullName>N2O reductase</fullName>
    </alternativeName>
</protein>
<gene>
    <name type="primary">nosZ</name>
</gene>
<comment type="function">
    <text>Nitrous-oxide reductase is part of a bacterial respiratory system which is activated under anaerobic conditions in the presence of nitrate or nitrous oxide.</text>
</comment>
<comment type="catalytic activity">
    <reaction>
        <text>N2 + 2 Fe(III)-[cytochrome c] + H2O = nitrous oxide + 2 Fe(II)-[cytochrome c] + 2 H(+)</text>
        <dbReference type="Rhea" id="RHEA:43108"/>
        <dbReference type="Rhea" id="RHEA-COMP:10350"/>
        <dbReference type="Rhea" id="RHEA-COMP:14399"/>
        <dbReference type="ChEBI" id="CHEBI:15377"/>
        <dbReference type="ChEBI" id="CHEBI:15378"/>
        <dbReference type="ChEBI" id="CHEBI:17045"/>
        <dbReference type="ChEBI" id="CHEBI:17997"/>
        <dbReference type="ChEBI" id="CHEBI:29033"/>
        <dbReference type="ChEBI" id="CHEBI:29034"/>
        <dbReference type="EC" id="1.7.2.4"/>
    </reaction>
</comment>
<comment type="cofactor">
    <cofactor evidence="1">
        <name>Ca(2+)</name>
        <dbReference type="ChEBI" id="CHEBI:29108"/>
    </cofactor>
    <text evidence="1">Binds 2 calcium ions per subunit.</text>
</comment>
<comment type="cofactor">
    <cofactor evidence="1">
        <name>Cu cation</name>
        <dbReference type="ChEBI" id="CHEBI:23378"/>
    </cofactor>
    <text evidence="1">Binds 6 Cu cations per subunit. Each subunit contains 2 copper centers; Cu(A) (binuclear) and Cu(Z) (tetranuclear). Cu(Z) is thought to be the site of nitrous oxide reduction.</text>
</comment>
<comment type="pathway">
    <text>Nitrogen metabolism; nitrate reduction (denitrification); dinitrogen from nitrate: step 4/4.</text>
</comment>
<comment type="subunit">
    <text evidence="1">Homodimer.</text>
</comment>
<comment type="subcellular location">
    <subcellularLocation>
        <location evidence="1">Periplasm</location>
    </subcellularLocation>
</comment>
<comment type="PTM">
    <text>Predicted to be exported by the Tat system. The position of the signal peptide cleavage has been experimentally proven.</text>
</comment>
<comment type="similarity">
    <text evidence="3">Belongs to the NosZ family.</text>
</comment>
<comment type="similarity">
    <text evidence="3">In the C-terminal section; belongs to the cytochrome c oxidase subunit 2 family.</text>
</comment>
<reference key="1">
    <citation type="submission" date="1997-01" db="EMBL/GenBank/DDBJ databases">
        <authorList>
            <person name="Chang W.C."/>
            <person name="Liu M.Y."/>
            <person name="Chang T."/>
            <person name="Payne W.J."/>
            <person name="Legall J."/>
            <person name="Chang W.C."/>
        </authorList>
    </citation>
    <scope>NUCLEOTIDE SEQUENCE [GENOMIC DNA]</scope>
</reference>
<reference key="2">
    <citation type="journal article" date="1998" name="DNA Res.">
        <title>Analysis of the nitrous oxide reduction genes, nosZDFYL, of Achromobacter cycloclastes.</title>
        <authorList>
            <person name="Inatomi K."/>
        </authorList>
    </citation>
    <scope>NUCLEOTIDE SEQUENCE [GENOMIC DNA]</scope>
    <source>
        <strain>ATCC 21921 / JCM 20009 / IAM 1013 / KCTC 2947 / LMG 1127 / NBRC 102459 / An-17</strain>
    </source>
</reference>
<reference key="3">
    <citation type="journal article" date="1998" name="J. Inorg. Biochem.">
        <title>The nos (nitrous oxide reductase) gene cluster from the soil bacterium Achromobacter cycloclastes: cloning, sequence analysis, and expression.</title>
        <authorList>
            <person name="McGuirl M.A."/>
            <person name="Nelson L.K."/>
            <person name="Bollinger J.A."/>
            <person name="Chan Y.-K."/>
            <person name="Dooley D.M."/>
        </authorList>
    </citation>
    <scope>NUCLEOTIDE SEQUENCE [GENOMIC DNA]</scope>
    <scope>PROTEIN SEQUENCE OF N-TERMINUS OF THE MATURE PROTEIN</scope>
    <source>
        <strain>ATCC 21921 / JCM 20009 / IAM 1013 / KCTC 2947 / LMG 1127 / NBRC 102459 / An-17</strain>
    </source>
</reference>
<proteinExistence type="evidence at protein level"/>
<dbReference type="EC" id="1.7.2.4"/>
<dbReference type="EMBL" id="X94977">
    <property type="protein sequence ID" value="CAA64426.1"/>
    <property type="molecule type" value="Genomic_DNA"/>
</dbReference>
<dbReference type="EMBL" id="Y15161">
    <property type="protein sequence ID" value="CAA75425.1"/>
    <property type="molecule type" value="Genomic_DNA"/>
</dbReference>
<dbReference type="EMBL" id="AF047429">
    <property type="protein sequence ID" value="AAD09157.1"/>
    <property type="molecule type" value="Genomic_DNA"/>
</dbReference>
<dbReference type="PDB" id="2IWF">
    <property type="method" value="X-ray"/>
    <property type="resolution" value="1.86 A"/>
    <property type="chains" value="A/B=1-642"/>
</dbReference>
<dbReference type="PDB" id="2IWK">
    <property type="method" value="X-ray"/>
    <property type="resolution" value="1.70 A"/>
    <property type="chains" value="A/B=1-642"/>
</dbReference>
<dbReference type="PDBsum" id="2IWF"/>
<dbReference type="PDBsum" id="2IWK"/>
<dbReference type="SMR" id="P94127"/>
<dbReference type="BRENDA" id="1.7.2.4">
    <property type="organism ID" value="69"/>
</dbReference>
<dbReference type="UniPathway" id="UPA00652">
    <property type="reaction ID" value="UER00709"/>
</dbReference>
<dbReference type="EvolutionaryTrace" id="P94127"/>
<dbReference type="GO" id="GO:0016020">
    <property type="term" value="C:membrane"/>
    <property type="evidence" value="ECO:0007669"/>
    <property type="project" value="InterPro"/>
</dbReference>
<dbReference type="GO" id="GO:0042597">
    <property type="term" value="C:periplasmic space"/>
    <property type="evidence" value="ECO:0007669"/>
    <property type="project" value="UniProtKB-SubCell"/>
</dbReference>
<dbReference type="GO" id="GO:0005509">
    <property type="term" value="F:calcium ion binding"/>
    <property type="evidence" value="ECO:0007669"/>
    <property type="project" value="UniProtKB-UniRule"/>
</dbReference>
<dbReference type="GO" id="GO:0005507">
    <property type="term" value="F:copper ion binding"/>
    <property type="evidence" value="ECO:0007669"/>
    <property type="project" value="UniProtKB-UniRule"/>
</dbReference>
<dbReference type="GO" id="GO:0004129">
    <property type="term" value="F:cytochrome-c oxidase activity"/>
    <property type="evidence" value="ECO:0007669"/>
    <property type="project" value="InterPro"/>
</dbReference>
<dbReference type="GO" id="GO:0050304">
    <property type="term" value="F:nitrous-oxide reductase activity"/>
    <property type="evidence" value="ECO:0007669"/>
    <property type="project" value="UniProtKB-UniRule"/>
</dbReference>
<dbReference type="GO" id="GO:0019333">
    <property type="term" value="P:denitrification pathway"/>
    <property type="evidence" value="ECO:0007669"/>
    <property type="project" value="UniProtKB-UniPathway"/>
</dbReference>
<dbReference type="CDD" id="cd04223">
    <property type="entry name" value="N2OR_C"/>
    <property type="match status" value="1"/>
</dbReference>
<dbReference type="Gene3D" id="2.60.40.420">
    <property type="entry name" value="Cupredoxins - blue copper proteins"/>
    <property type="match status" value="1"/>
</dbReference>
<dbReference type="Gene3D" id="2.130.10.10">
    <property type="entry name" value="YVTN repeat-like/Quinoprotein amine dehydrogenase"/>
    <property type="match status" value="1"/>
</dbReference>
<dbReference type="HAMAP" id="MF_00716">
    <property type="entry name" value="NosZ"/>
    <property type="match status" value="1"/>
</dbReference>
<dbReference type="InterPro" id="IPR002429">
    <property type="entry name" value="CcO_II-like_C"/>
</dbReference>
<dbReference type="InterPro" id="IPR008972">
    <property type="entry name" value="Cupredoxin"/>
</dbReference>
<dbReference type="InterPro" id="IPR011045">
    <property type="entry name" value="N2O_reductase_N"/>
</dbReference>
<dbReference type="InterPro" id="IPR034205">
    <property type="entry name" value="N2OR_C"/>
</dbReference>
<dbReference type="InterPro" id="IPR023644">
    <property type="entry name" value="NO_Rdtase"/>
</dbReference>
<dbReference type="InterPro" id="IPR041114">
    <property type="entry name" value="Nos_propeller"/>
</dbReference>
<dbReference type="InterPro" id="IPR041142">
    <property type="entry name" value="NOS_propeller_2"/>
</dbReference>
<dbReference type="InterPro" id="IPR051403">
    <property type="entry name" value="NosZ/Cyto_c_oxidase_sub2"/>
</dbReference>
<dbReference type="InterPro" id="IPR006311">
    <property type="entry name" value="TAT_signal"/>
</dbReference>
<dbReference type="InterPro" id="IPR015943">
    <property type="entry name" value="WD40/YVTN_repeat-like_dom_sf"/>
</dbReference>
<dbReference type="NCBIfam" id="TIGR04244">
    <property type="entry name" value="nitrous_NosZ_RR"/>
    <property type="match status" value="1"/>
</dbReference>
<dbReference type="PANTHER" id="PTHR42838">
    <property type="entry name" value="CYTOCHROME C OXIDASE SUBUNIT II"/>
    <property type="match status" value="1"/>
</dbReference>
<dbReference type="PANTHER" id="PTHR42838:SF2">
    <property type="entry name" value="NITROUS-OXIDE REDUCTASE"/>
    <property type="match status" value="1"/>
</dbReference>
<dbReference type="Pfam" id="PF18764">
    <property type="entry name" value="nos_propeller"/>
    <property type="match status" value="1"/>
</dbReference>
<dbReference type="Pfam" id="PF18793">
    <property type="entry name" value="nos_propeller_2"/>
    <property type="match status" value="1"/>
</dbReference>
<dbReference type="SUPFAM" id="SSF49503">
    <property type="entry name" value="Cupredoxins"/>
    <property type="match status" value="1"/>
</dbReference>
<dbReference type="SUPFAM" id="SSF50974">
    <property type="entry name" value="Nitrous oxide reductase, N-terminal domain"/>
    <property type="match status" value="1"/>
</dbReference>
<dbReference type="PROSITE" id="PS50857">
    <property type="entry name" value="COX2_CUA"/>
    <property type="match status" value="1"/>
</dbReference>
<dbReference type="PROSITE" id="PS51318">
    <property type="entry name" value="TAT"/>
    <property type="match status" value="1"/>
</dbReference>
<organism>
    <name type="scientific">Achromobacter cycloclastes</name>
    <dbReference type="NCBI Taxonomy" id="223"/>
    <lineage>
        <taxon>Bacteria</taxon>
        <taxon>Pseudomonadati</taxon>
        <taxon>Pseudomonadota</taxon>
        <taxon>Betaproteobacteria</taxon>
        <taxon>Burkholderiales</taxon>
        <taxon>Alcaligenaceae</taxon>
        <taxon>Achromobacter</taxon>
    </lineage>
</organism>
<evidence type="ECO:0000250" key="1"/>
<evidence type="ECO:0000269" key="2">
    <source>
    </source>
</evidence>
<evidence type="ECO:0000305" key="3"/>
<evidence type="ECO:0007829" key="4">
    <source>
        <dbReference type="PDB" id="2IWK"/>
    </source>
</evidence>
<sequence>MESKEHKGLSRRALFSATAGSAILAGTVGPAALSLGAAGLATPARAATGADGSVAPGKLDDYYGFWSSGQTGEMRILGIPSMRELMRVPVFNRCSATGWGQTNESIRIHQRTMTEKTKKQLAANGKKIHDNGDLHHVHMSFTDGKYDGRYLFMNDKANTRVARVRCDVMKTDAILEIPNAKGIHGMRPQKWPRSNYVFCNGEDEAPLVNDGSTMTDVATYVNIFTAVDADKWEVAWQVKVSGNLDNCDADYEGKWAFSTSYNSEMGMTLEEMTKSEMDHVVVFNIAEIEKAIKAGQYEEINGVKVVDGRKEAKSLFTRYIPIANNPHGCNMAPDRKHLCVAGKLSPTVTVLDVTKFDALFYDNAEPRSAVVAEPELGLGPLHTAFDGRGNAYTSLFLDSQVVKWNIDEAIRAYAGEKINPIKDKLDVQYQPGHLKTVMGETLDAANDWLVCLCKFSKDRFLNVGPLKPENDQLIDISGDKMVLVHDGPTFAEPHDAIAVSPSILPNIRSVWDRKDPLWAETRKQAEADEVDIDEWTEAVIRDGNKVRVYMTSVAPSFSQPSFTVKEGDEVTVIVTNLDEIDDLTHGFTMGNHGVAMEVGPQQTSSVTFVAANPGVYWYYCQWFCHALHMEMRGRMFVEPKGA</sequence>
<accession>P94127</accession>
<accession>O68477</accession>
<keyword id="KW-0002">3D-structure</keyword>
<keyword id="KW-0106">Calcium</keyword>
<keyword id="KW-0186">Copper</keyword>
<keyword id="KW-0903">Direct protein sequencing</keyword>
<keyword id="KW-0479">Metal-binding</keyword>
<keyword id="KW-0560">Oxidoreductase</keyword>
<keyword id="KW-0574">Periplasm</keyword>
<keyword id="KW-0732">Signal</keyword>